<organism>
    <name type="scientific">Serratia proteamaculans (strain 568)</name>
    <dbReference type="NCBI Taxonomy" id="399741"/>
    <lineage>
        <taxon>Bacteria</taxon>
        <taxon>Pseudomonadati</taxon>
        <taxon>Pseudomonadota</taxon>
        <taxon>Gammaproteobacteria</taxon>
        <taxon>Enterobacterales</taxon>
        <taxon>Yersiniaceae</taxon>
        <taxon>Serratia</taxon>
    </lineage>
</organism>
<feature type="chain" id="PRO_1000062200" description="UPF0301 protein Spro_4027">
    <location>
        <begin position="1"/>
        <end position="187"/>
    </location>
</feature>
<dbReference type="EMBL" id="CP000826">
    <property type="protein sequence ID" value="ABV43122.1"/>
    <property type="molecule type" value="Genomic_DNA"/>
</dbReference>
<dbReference type="SMR" id="A8GJ32"/>
<dbReference type="STRING" id="399741.Spro_4027"/>
<dbReference type="KEGG" id="spe:Spro_4027"/>
<dbReference type="eggNOG" id="COG1678">
    <property type="taxonomic scope" value="Bacteria"/>
</dbReference>
<dbReference type="HOGENOM" id="CLU_057596_1_0_6"/>
<dbReference type="OrthoDB" id="9807486at2"/>
<dbReference type="GO" id="GO:0005829">
    <property type="term" value="C:cytosol"/>
    <property type="evidence" value="ECO:0007669"/>
    <property type="project" value="TreeGrafter"/>
</dbReference>
<dbReference type="Gene3D" id="3.40.1740.10">
    <property type="entry name" value="VC0467-like"/>
    <property type="match status" value="1"/>
</dbReference>
<dbReference type="HAMAP" id="MF_00758">
    <property type="entry name" value="UPF0301"/>
    <property type="match status" value="1"/>
</dbReference>
<dbReference type="InterPro" id="IPR003774">
    <property type="entry name" value="AlgH-like"/>
</dbReference>
<dbReference type="NCBIfam" id="NF001266">
    <property type="entry name" value="PRK00228.1-1"/>
    <property type="match status" value="1"/>
</dbReference>
<dbReference type="PANTHER" id="PTHR30327">
    <property type="entry name" value="UNCHARACTERIZED PROTEIN YQGE"/>
    <property type="match status" value="1"/>
</dbReference>
<dbReference type="PANTHER" id="PTHR30327:SF1">
    <property type="entry name" value="UPF0301 PROTEIN YQGE"/>
    <property type="match status" value="1"/>
</dbReference>
<dbReference type="Pfam" id="PF02622">
    <property type="entry name" value="DUF179"/>
    <property type="match status" value="1"/>
</dbReference>
<dbReference type="SUPFAM" id="SSF143456">
    <property type="entry name" value="VC0467-like"/>
    <property type="match status" value="1"/>
</dbReference>
<accession>A8GJ32</accession>
<name>Y4027_SERP5</name>
<proteinExistence type="inferred from homology"/>
<sequence length="187" mass="20638">MNLQHHFLIAMPSLQDPRFKRSVIYVCEHNEDGAMGLVINKPVEQFTVETVLSKLKIMPQARDPAISLDKPVFAGGPLADDRGFILHTPRKGFGSSIQISPDTMITTSKDVLETLGTPEQPDDVLVALGYAGWEKGQLEQEVLENAWLTIEADTDILFHTPIASRWREAANRLGIDICSIANHAGHA</sequence>
<comment type="similarity">
    <text evidence="1">Belongs to the UPF0301 (AlgH) family.</text>
</comment>
<protein>
    <recommendedName>
        <fullName evidence="1">UPF0301 protein Spro_4027</fullName>
    </recommendedName>
</protein>
<reference key="1">
    <citation type="submission" date="2007-09" db="EMBL/GenBank/DDBJ databases">
        <title>Complete sequence of chromosome of Serratia proteamaculans 568.</title>
        <authorList>
            <consortium name="US DOE Joint Genome Institute"/>
            <person name="Copeland A."/>
            <person name="Lucas S."/>
            <person name="Lapidus A."/>
            <person name="Barry K."/>
            <person name="Glavina del Rio T."/>
            <person name="Dalin E."/>
            <person name="Tice H."/>
            <person name="Pitluck S."/>
            <person name="Chain P."/>
            <person name="Malfatti S."/>
            <person name="Shin M."/>
            <person name="Vergez L."/>
            <person name="Schmutz J."/>
            <person name="Larimer F."/>
            <person name="Land M."/>
            <person name="Hauser L."/>
            <person name="Kyrpides N."/>
            <person name="Kim E."/>
            <person name="Taghavi S."/>
            <person name="Newman L."/>
            <person name="Vangronsveld J."/>
            <person name="van der Lelie D."/>
            <person name="Richardson P."/>
        </authorList>
    </citation>
    <scope>NUCLEOTIDE SEQUENCE [LARGE SCALE GENOMIC DNA]</scope>
    <source>
        <strain>568</strain>
    </source>
</reference>
<evidence type="ECO:0000255" key="1">
    <source>
        <dbReference type="HAMAP-Rule" id="MF_00758"/>
    </source>
</evidence>
<gene>
    <name type="ordered locus">Spro_4027</name>
</gene>